<reference key="1">
    <citation type="journal article" date="1997" name="Nat. Genet.">
        <title>The mitochondrial genome of Arabidopsis thaliana contains 57 genes in 366,924 nucleotides.</title>
        <authorList>
            <person name="Unseld M."/>
            <person name="Marienfeld J.R."/>
            <person name="Brandt P."/>
            <person name="Brennicke A."/>
        </authorList>
    </citation>
    <scope>NUCLEOTIDE SEQUENCE [LARGE SCALE GENOMIC DNA]</scope>
    <source>
        <strain>cv. C24</strain>
    </source>
</reference>
<reference key="2">
    <citation type="journal article" date="2018" name="Plant Cell">
        <title>Correction of persistent errors in Arabidopsis reference mitochondrial genomes.</title>
        <authorList>
            <person name="Sloan D.B."/>
            <person name="Wu Z."/>
            <person name="Sharbrough J."/>
        </authorList>
    </citation>
    <scope>NUCLEOTIDE SEQUENCE [LARGE SCALE GENOMIC DNA]</scope>
    <source>
        <strain>cv. Columbia</strain>
    </source>
</reference>
<comment type="subcellular location">
    <subcellularLocation>
        <location evidence="3">Mitochondrion membrane</location>
        <topology evidence="3">Multi-pass membrane protein</topology>
    </subcellularLocation>
</comment>
<keyword id="KW-0472">Membrane</keyword>
<keyword id="KW-0496">Mitochondrion</keyword>
<keyword id="KW-1185">Reference proteome</keyword>
<keyword id="KW-0812">Transmembrane</keyword>
<keyword id="KW-1133">Transmembrane helix</keyword>
<proteinExistence type="predicted"/>
<organism>
    <name type="scientific">Arabidopsis thaliana</name>
    <name type="common">Mouse-ear cress</name>
    <dbReference type="NCBI Taxonomy" id="3702"/>
    <lineage>
        <taxon>Eukaryota</taxon>
        <taxon>Viridiplantae</taxon>
        <taxon>Streptophyta</taxon>
        <taxon>Embryophyta</taxon>
        <taxon>Tracheophyta</taxon>
        <taxon>Spermatophyta</taxon>
        <taxon>Magnoliopsida</taxon>
        <taxon>eudicotyledons</taxon>
        <taxon>Gunneridae</taxon>
        <taxon>Pentapetalae</taxon>
        <taxon>rosids</taxon>
        <taxon>malvids</taxon>
        <taxon>Brassicales</taxon>
        <taxon>Brassicaceae</taxon>
        <taxon>Camelineae</taxon>
        <taxon>Arabidopsis</taxon>
    </lineage>
</organism>
<accession>P93319</accession>
<evidence type="ECO:0000255" key="1"/>
<evidence type="ECO:0000256" key="2">
    <source>
        <dbReference type="SAM" id="MobiDB-lite"/>
    </source>
</evidence>
<evidence type="ECO:0000305" key="3"/>
<dbReference type="EMBL" id="Y08501">
    <property type="protein sequence ID" value="CAA69751.1"/>
    <property type="molecule type" value="Genomic_DNA"/>
</dbReference>
<dbReference type="EMBL" id="BK010421">
    <property type="status" value="NOT_ANNOTATED_CDS"/>
    <property type="molecule type" value="Genomic_DNA"/>
</dbReference>
<dbReference type="RefSeq" id="NP_085527.1">
    <property type="nucleotide sequence ID" value="NC_001284.2"/>
</dbReference>
<dbReference type="SMR" id="P93319"/>
<dbReference type="STRING" id="3702.P93319"/>
<dbReference type="PaxDb" id="3702-ATMG00670.1"/>
<dbReference type="EnsemblPlants" id="ATMG00670.1">
    <property type="protein sequence ID" value="ATMG00670.1"/>
    <property type="gene ID" value="ATMG00670"/>
</dbReference>
<dbReference type="Gramene" id="ATMG00670.1">
    <property type="protein sequence ID" value="ATMG00670.1"/>
    <property type="gene ID" value="ATMG00670"/>
</dbReference>
<dbReference type="Araport" id="ATMG00670"/>
<dbReference type="TAIR" id="ATMG00670">
    <property type="gene designation" value="ORF275"/>
</dbReference>
<dbReference type="HOGENOM" id="CLU_1013181_0_0_1"/>
<dbReference type="InParanoid" id="P93319"/>
<dbReference type="PRO" id="PR:P93319"/>
<dbReference type="Proteomes" id="UP000006548">
    <property type="component" value="Mitochondrion MT"/>
</dbReference>
<dbReference type="ExpressionAtlas" id="P93319">
    <property type="expression patterns" value="baseline and differential"/>
</dbReference>
<dbReference type="GO" id="GO:0031966">
    <property type="term" value="C:mitochondrial membrane"/>
    <property type="evidence" value="ECO:0007669"/>
    <property type="project" value="UniProtKB-SubCell"/>
</dbReference>
<geneLocation type="mitochondrion"/>
<sequence length="275" mass="30211">MKKYKMVINIDMLRLFLPLLGGSVSGSLFGRFLGSEGSAIMITTCVSFCALVVFIFGLFYFRKKGPLKRILYLFLVGFVLSLIRIKVVYLLGGQALPLLDPILMYAVGAGALLGPNGAESSATWEEDSFELDVLGESFSSSKTDMDSQVAEAPQTEEGEPSVNQVPQEAGASHRVGPYQDQGLATDRNGNPIDLNDSLPPSSLLYGEIESSASVRARDLELEKDIKRVQRLTRNFDNAEDPARRLEVAARLDPEVRELDQKWALFQEKDASGLGR</sequence>
<gene>
    <name type="ordered locus">AtMg00670</name>
</gene>
<protein>
    <recommendedName>
        <fullName>Uncharacterized mitochondrial protein AtMg00670</fullName>
    </recommendedName>
    <alternativeName>
        <fullName>ORF275</fullName>
    </alternativeName>
</protein>
<name>M670_ARATH</name>
<feature type="chain" id="PRO_0000196783" description="Uncharacterized mitochondrial protein AtMg00670">
    <location>
        <begin position="1"/>
        <end position="275"/>
    </location>
</feature>
<feature type="transmembrane region" description="Helical" evidence="1">
    <location>
        <begin position="15"/>
        <end position="35"/>
    </location>
</feature>
<feature type="transmembrane region" description="Helical" evidence="1">
    <location>
        <begin position="39"/>
        <end position="59"/>
    </location>
</feature>
<feature type="transmembrane region" description="Helical" evidence="1">
    <location>
        <begin position="70"/>
        <end position="90"/>
    </location>
</feature>
<feature type="region of interest" description="Disordered" evidence="2">
    <location>
        <begin position="140"/>
        <end position="191"/>
    </location>
</feature>